<reference key="1">
    <citation type="journal article" date="2006" name="J. Neurosci.">
        <title>A novel family of adhesion-like molecules that interacts with the NMDA receptor.</title>
        <authorList>
            <person name="Wang C.Y."/>
            <person name="Chang K."/>
            <person name="Petralia R.S."/>
            <person name="Wang Y.X."/>
            <person name="Seabold G.K."/>
            <person name="Wenthold R.J."/>
        </authorList>
    </citation>
    <scope>NUCLEOTIDE SEQUENCE [MRNA]</scope>
    <scope>FUNCTION</scope>
    <scope>SUBCELLULAR LOCATION</scope>
    <scope>INTERACTION WITH DLG1; DLG3; DLG4; GRIN1 AND GRIN2A</scope>
    <scope>MUTAGENESIS OF 785-GLU--VAL-788</scope>
    <source>
        <strain>Sprague-Dawley</strain>
    </source>
</reference>
<reference key="2">
    <citation type="journal article" date="2008" name="J. Biol. Chem.">
        <title>The SALM family of adhesion-like molecules forms heteromeric and homomeric complexes.</title>
        <authorList>
            <person name="Seabold G.K."/>
            <person name="Wang P.Y."/>
            <person name="Chang K."/>
            <person name="Wang C.Y."/>
            <person name="Wang Y.X."/>
            <person name="Petralia R.S."/>
            <person name="Wenthold R.J."/>
        </authorList>
    </citation>
    <scope>INTERACTION WITH LRFN1 AND LRFN4</scope>
    <scope>MUTAGENESIS OF 785-GLU--VAL-788</scope>
</reference>
<reference key="3">
    <citation type="journal article" date="2008" name="Mol. Cell. Neurosci.">
        <title>Synaptic adhesion-like molecules (SALMs) promote neurite outgrowth.</title>
        <authorList>
            <person name="Wang P.Y."/>
            <person name="Seabold G.K."/>
            <person name="Wenthold R.J."/>
        </authorList>
    </citation>
    <scope>FUNCTION</scope>
</reference>
<keyword id="KW-1003">Cell membrane</keyword>
<keyword id="KW-1015">Disulfide bond</keyword>
<keyword id="KW-0325">Glycoprotein</keyword>
<keyword id="KW-0393">Immunoglobulin domain</keyword>
<keyword id="KW-0433">Leucine-rich repeat</keyword>
<keyword id="KW-0472">Membrane</keyword>
<keyword id="KW-0628">Postsynaptic cell membrane</keyword>
<keyword id="KW-1185">Reference proteome</keyword>
<keyword id="KW-0677">Repeat</keyword>
<keyword id="KW-0732">Signal</keyword>
<keyword id="KW-0770">Synapse</keyword>
<keyword id="KW-0812">Transmembrane</keyword>
<keyword id="KW-1133">Transmembrane helix</keyword>
<accession>Q460M5</accession>
<sequence>METLLGGLLAFGMAFAVVDACPKYCVCQNLSESLGTLCPSKGLLFVPPDIDRRTVELRLGGNFIIHIGRQDFANMTGLVDLTLSRNTISHIQPFSFLDLESLRSLHLDSNRLPSLGEDTLRGLVNLQHLIVNNNQLGGIADDAFEDFLLTLEDLDLSYNNLHGLPWDSVRRMVNLHQLSLDHNLLDHIAEGTFADLQKLARLDLTSNRLQKLPPDPIFARSQASLLTATPFAPPLSFSFGGNPLHCNCELLWLRRLERDDDLKTCGSPGGLKGRYFWHIREEEFVCEPPLITQHTHKLLVLEGQAATLKCKAIGDPSPLIHWVAPDDRLVGNSSRTAVYDNGTLDILITTSQDSGPFTCIAANAAGEATATVEVSIVQLPHLSNSTSRMAPPKSRLSDITGSSKTSRGGGGSGAGEPPKSTPERAVLVSDVTTTSALVKWSVSKSAPRVKMYQLQYNCSDDEVLIYRMIPASNKAFVVNNLVSGTGYDLCVLAMWDDTATTLTATNIVGCAQFFTKADYPQCQSMHSQILGGTMILVIGGIIVATLLVFIVILMVRYKVCNHDAPGKMAAATVSNVYSQTNGAQPPPLGGMPVGQLPQAPPKVVVRNELMDFSTSLARACDSSSSSSLGSGEAAGLSRGPWRLPPPAPRPKPSLDRLMGAFASLDLKSQRKEELLDSRTPAGRGAGTSARGHHSDREPLLGPPATRARSLLPLPLEGKAKRSHSFDMGDFAAAAAAAPGGYSPPRRVSNIWTKRSLSVNGMLLPFEENDLVGARGTFGSSEWVMESTV</sequence>
<dbReference type="EMBL" id="DQ070869">
    <property type="protein sequence ID" value="AAZ20638.1"/>
    <property type="molecule type" value="mRNA"/>
</dbReference>
<dbReference type="SMR" id="Q460M5"/>
<dbReference type="FunCoup" id="Q460M5">
    <property type="interactions" value="1521"/>
</dbReference>
<dbReference type="IntAct" id="Q460M5">
    <property type="interactions" value="6"/>
</dbReference>
<dbReference type="STRING" id="10116.ENSRNOP00000015705"/>
<dbReference type="GlyCosmos" id="Q460M5">
    <property type="glycosylation" value="6 sites, No reported glycans"/>
</dbReference>
<dbReference type="GlyGen" id="Q460M5">
    <property type="glycosylation" value="6 sites"/>
</dbReference>
<dbReference type="PhosphoSitePlus" id="Q460M5"/>
<dbReference type="PaxDb" id="10116-ENSRNOP00000015705"/>
<dbReference type="UCSC" id="RGD:1311831">
    <property type="organism name" value="rat"/>
</dbReference>
<dbReference type="AGR" id="RGD:1311831"/>
<dbReference type="RGD" id="1311831">
    <property type="gene designation" value="Lrfn2"/>
</dbReference>
<dbReference type="eggNOG" id="KOG0619">
    <property type="taxonomic scope" value="Eukaryota"/>
</dbReference>
<dbReference type="InParanoid" id="Q460M5"/>
<dbReference type="PhylomeDB" id="Q460M5"/>
<dbReference type="Reactome" id="R-RNO-8849932">
    <property type="pathway name" value="Synaptic adhesion-like molecules"/>
</dbReference>
<dbReference type="PRO" id="PR:Q460M5"/>
<dbReference type="Proteomes" id="UP000002494">
    <property type="component" value="Unplaced"/>
</dbReference>
<dbReference type="GO" id="GO:0009986">
    <property type="term" value="C:cell surface"/>
    <property type="evidence" value="ECO:0000266"/>
    <property type="project" value="RGD"/>
</dbReference>
<dbReference type="GO" id="GO:0098794">
    <property type="term" value="C:postsynapse"/>
    <property type="evidence" value="ECO:0000266"/>
    <property type="project" value="RGD"/>
</dbReference>
<dbReference type="GO" id="GO:0098839">
    <property type="term" value="C:postsynaptic density membrane"/>
    <property type="evidence" value="ECO:0000314"/>
    <property type="project" value="SynGO"/>
</dbReference>
<dbReference type="GO" id="GO:0098793">
    <property type="term" value="C:presynapse"/>
    <property type="evidence" value="ECO:0000266"/>
    <property type="project" value="RGD"/>
</dbReference>
<dbReference type="GO" id="GO:0098685">
    <property type="term" value="C:Schaffer collateral - CA1 synapse"/>
    <property type="evidence" value="ECO:0000266"/>
    <property type="project" value="RGD"/>
</dbReference>
<dbReference type="GO" id="GO:0050804">
    <property type="term" value="P:modulation of chemical synaptic transmission"/>
    <property type="evidence" value="ECO:0000266"/>
    <property type="project" value="RGD"/>
</dbReference>
<dbReference type="GO" id="GO:0099175">
    <property type="term" value="P:regulation of postsynapse organization"/>
    <property type="evidence" value="ECO:0000266"/>
    <property type="project" value="RGD"/>
</dbReference>
<dbReference type="CDD" id="cd00063">
    <property type="entry name" value="FN3"/>
    <property type="match status" value="1"/>
</dbReference>
<dbReference type="FunFam" id="2.60.40.10:FF:000235">
    <property type="entry name" value="Leucine-rich repeat and fibronectin type III domain-containing 2"/>
    <property type="match status" value="1"/>
</dbReference>
<dbReference type="FunFam" id="3.80.10.10:FF:000045">
    <property type="entry name" value="Leucine-rich repeat and fibronectin type III domain-containing 2"/>
    <property type="match status" value="1"/>
</dbReference>
<dbReference type="FunFam" id="2.60.40.10:FF:000091">
    <property type="entry name" value="Leucine-rich repeat and fibronectin type III domain-containing protein 1"/>
    <property type="match status" value="1"/>
</dbReference>
<dbReference type="FunFam" id="3.80.10.10:FF:000019">
    <property type="entry name" value="leucine-rich repeat and fibronectin type III domain-containing protein 1"/>
    <property type="match status" value="1"/>
</dbReference>
<dbReference type="Gene3D" id="2.60.40.10">
    <property type="entry name" value="Immunoglobulins"/>
    <property type="match status" value="2"/>
</dbReference>
<dbReference type="Gene3D" id="3.80.10.10">
    <property type="entry name" value="Ribonuclease Inhibitor"/>
    <property type="match status" value="2"/>
</dbReference>
<dbReference type="InterPro" id="IPR000483">
    <property type="entry name" value="Cys-rich_flank_reg_C"/>
</dbReference>
<dbReference type="InterPro" id="IPR003961">
    <property type="entry name" value="FN3_dom"/>
</dbReference>
<dbReference type="InterPro" id="IPR036116">
    <property type="entry name" value="FN3_sf"/>
</dbReference>
<dbReference type="InterPro" id="IPR007110">
    <property type="entry name" value="Ig-like_dom"/>
</dbReference>
<dbReference type="InterPro" id="IPR036179">
    <property type="entry name" value="Ig-like_dom_sf"/>
</dbReference>
<dbReference type="InterPro" id="IPR013783">
    <property type="entry name" value="Ig-like_fold"/>
</dbReference>
<dbReference type="InterPro" id="IPR013098">
    <property type="entry name" value="Ig_I-set"/>
</dbReference>
<dbReference type="InterPro" id="IPR003599">
    <property type="entry name" value="Ig_sub"/>
</dbReference>
<dbReference type="InterPro" id="IPR003598">
    <property type="entry name" value="Ig_sub2"/>
</dbReference>
<dbReference type="InterPro" id="IPR001611">
    <property type="entry name" value="Leu-rich_rpt"/>
</dbReference>
<dbReference type="InterPro" id="IPR003591">
    <property type="entry name" value="Leu-rich_rpt_typical-subtyp"/>
</dbReference>
<dbReference type="InterPro" id="IPR050467">
    <property type="entry name" value="LRFN"/>
</dbReference>
<dbReference type="InterPro" id="IPR032675">
    <property type="entry name" value="LRR_dom_sf"/>
</dbReference>
<dbReference type="PANTHER" id="PTHR45842:SF6">
    <property type="entry name" value="LEUCINE-RICH REPEAT AND FIBRONECTIN TYPE-III DOMAIN-CONTAINING PROTEIN 2"/>
    <property type="match status" value="1"/>
</dbReference>
<dbReference type="PANTHER" id="PTHR45842">
    <property type="entry name" value="SYNAPTIC ADHESION-LIKE MOLECULE SALM"/>
    <property type="match status" value="1"/>
</dbReference>
<dbReference type="Pfam" id="PF00041">
    <property type="entry name" value="fn3"/>
    <property type="match status" value="1"/>
</dbReference>
<dbReference type="Pfam" id="PF07679">
    <property type="entry name" value="I-set"/>
    <property type="match status" value="1"/>
</dbReference>
<dbReference type="Pfam" id="PF13855">
    <property type="entry name" value="LRR_8"/>
    <property type="match status" value="2"/>
</dbReference>
<dbReference type="SMART" id="SM00409">
    <property type="entry name" value="IG"/>
    <property type="match status" value="1"/>
</dbReference>
<dbReference type="SMART" id="SM00408">
    <property type="entry name" value="IGc2"/>
    <property type="match status" value="1"/>
</dbReference>
<dbReference type="SMART" id="SM00369">
    <property type="entry name" value="LRR_TYP"/>
    <property type="match status" value="6"/>
</dbReference>
<dbReference type="SMART" id="SM00082">
    <property type="entry name" value="LRRCT"/>
    <property type="match status" value="1"/>
</dbReference>
<dbReference type="SUPFAM" id="SSF49265">
    <property type="entry name" value="Fibronectin type III"/>
    <property type="match status" value="1"/>
</dbReference>
<dbReference type="SUPFAM" id="SSF48726">
    <property type="entry name" value="Immunoglobulin"/>
    <property type="match status" value="1"/>
</dbReference>
<dbReference type="SUPFAM" id="SSF52058">
    <property type="entry name" value="L domain-like"/>
    <property type="match status" value="1"/>
</dbReference>
<dbReference type="PROSITE" id="PS50853">
    <property type="entry name" value="FN3"/>
    <property type="match status" value="1"/>
</dbReference>
<dbReference type="PROSITE" id="PS50835">
    <property type="entry name" value="IG_LIKE"/>
    <property type="match status" value="1"/>
</dbReference>
<dbReference type="PROSITE" id="PS51450">
    <property type="entry name" value="LRR"/>
    <property type="match status" value="6"/>
</dbReference>
<feature type="signal peptide" evidence="2">
    <location>
        <begin position="1"/>
        <end position="20"/>
    </location>
</feature>
<feature type="chain" id="PRO_0000394519" description="Leucine-rich repeat and fibronectin type-III domain-containing protein 2">
    <location>
        <begin position="21"/>
        <end position="788"/>
    </location>
</feature>
<feature type="topological domain" description="Extracellular" evidence="2">
    <location>
        <begin position="21"/>
        <end position="534"/>
    </location>
</feature>
<feature type="transmembrane region" description="Helical" evidence="2">
    <location>
        <begin position="535"/>
        <end position="555"/>
    </location>
</feature>
<feature type="topological domain" description="Cytoplasmic" evidence="2">
    <location>
        <begin position="556"/>
        <end position="788"/>
    </location>
</feature>
<feature type="domain" description="LRRNT">
    <location>
        <begin position="21"/>
        <end position="52"/>
    </location>
</feature>
<feature type="repeat" description="LRR 1">
    <location>
        <begin position="53"/>
        <end position="74"/>
    </location>
</feature>
<feature type="repeat" description="LRR 2">
    <location>
        <begin position="77"/>
        <end position="98"/>
    </location>
</feature>
<feature type="repeat" description="LRR 3">
    <location>
        <begin position="101"/>
        <end position="122"/>
    </location>
</feature>
<feature type="repeat" description="LRR 4">
    <location>
        <begin position="125"/>
        <end position="146"/>
    </location>
</feature>
<feature type="repeat" description="LRR 5">
    <location>
        <begin position="150"/>
        <end position="171"/>
    </location>
</feature>
<feature type="repeat" description="LRR 6">
    <location>
        <begin position="174"/>
        <end position="195"/>
    </location>
</feature>
<feature type="repeat" description="LRR 7">
    <location>
        <begin position="198"/>
        <end position="219"/>
    </location>
</feature>
<feature type="domain" description="LRRCT">
    <location>
        <begin position="242"/>
        <end position="288"/>
    </location>
</feature>
<feature type="domain" description="Ig-like">
    <location>
        <begin position="289"/>
        <end position="375"/>
    </location>
</feature>
<feature type="domain" description="Fibronectin type-III" evidence="4">
    <location>
        <begin position="422"/>
        <end position="518"/>
    </location>
</feature>
<feature type="region of interest" description="Disordered" evidence="5">
    <location>
        <begin position="383"/>
        <end position="423"/>
    </location>
</feature>
<feature type="region of interest" description="Disordered" evidence="5">
    <location>
        <begin position="620"/>
        <end position="655"/>
    </location>
</feature>
<feature type="region of interest" description="Disordered" evidence="5">
    <location>
        <begin position="668"/>
        <end position="707"/>
    </location>
</feature>
<feature type="short sequence motif" description="PDZ-binding">
    <location>
        <begin position="785"/>
        <end position="788"/>
    </location>
</feature>
<feature type="compositionally biased region" description="Low complexity" evidence="5">
    <location>
        <begin position="620"/>
        <end position="641"/>
    </location>
</feature>
<feature type="compositionally biased region" description="Pro residues" evidence="5">
    <location>
        <begin position="642"/>
        <end position="651"/>
    </location>
</feature>
<feature type="glycosylation site" description="N-linked (GlcNAc...) asparagine" evidence="2">
    <location>
        <position position="29"/>
    </location>
</feature>
<feature type="glycosylation site" description="N-linked (GlcNAc...) asparagine" evidence="2">
    <location>
        <position position="74"/>
    </location>
</feature>
<feature type="glycosylation site" description="N-linked (GlcNAc...) asparagine" evidence="2">
    <location>
        <position position="332"/>
    </location>
</feature>
<feature type="glycosylation site" description="N-linked (GlcNAc...) asparagine" evidence="2">
    <location>
        <position position="341"/>
    </location>
</feature>
<feature type="glycosylation site" description="N-linked (GlcNAc...) asparagine" evidence="2">
    <location>
        <position position="384"/>
    </location>
</feature>
<feature type="glycosylation site" description="N-linked (GlcNAc...) asparagine" evidence="2">
    <location>
        <position position="457"/>
    </location>
</feature>
<feature type="disulfide bond" evidence="3">
    <location>
        <begin position="310"/>
        <end position="359"/>
    </location>
</feature>
<feature type="mutagenesis site" description="Severe decrease in cell surface expression. Loss of neurite outgrowth promotion. Loss of DLG4-binding. No effect on LRFN1-,LRFN3-, and LRFN4-binding, nor on homomeric interactions." evidence="6 7">
    <location>
        <begin position="785"/>
        <end position="788"/>
    </location>
</feature>
<gene>
    <name type="primary">Lrfn2</name>
    <name type="synonym">Salm1</name>
</gene>
<proteinExistence type="evidence at protein level"/>
<evidence type="ECO:0000250" key="1"/>
<evidence type="ECO:0000255" key="2"/>
<evidence type="ECO:0000255" key="3">
    <source>
        <dbReference type="PROSITE-ProRule" id="PRU00114"/>
    </source>
</evidence>
<evidence type="ECO:0000255" key="4">
    <source>
        <dbReference type="PROSITE-ProRule" id="PRU00316"/>
    </source>
</evidence>
<evidence type="ECO:0000256" key="5">
    <source>
        <dbReference type="SAM" id="MobiDB-lite"/>
    </source>
</evidence>
<evidence type="ECO:0000269" key="6">
    <source>
    </source>
</evidence>
<evidence type="ECO:0000269" key="7">
    <source>
    </source>
</evidence>
<evidence type="ECO:0000269" key="8">
    <source>
    </source>
</evidence>
<evidence type="ECO:0000305" key="9"/>
<protein>
    <recommendedName>
        <fullName>Leucine-rich repeat and fibronectin type-III domain-containing protein 2</fullName>
    </recommendedName>
</protein>
<name>LRFN2_RAT</name>
<organism>
    <name type="scientific">Rattus norvegicus</name>
    <name type="common">Rat</name>
    <dbReference type="NCBI Taxonomy" id="10116"/>
    <lineage>
        <taxon>Eukaryota</taxon>
        <taxon>Metazoa</taxon>
        <taxon>Chordata</taxon>
        <taxon>Craniata</taxon>
        <taxon>Vertebrata</taxon>
        <taxon>Euteleostomi</taxon>
        <taxon>Mammalia</taxon>
        <taxon>Eutheria</taxon>
        <taxon>Euarchontoglires</taxon>
        <taxon>Glires</taxon>
        <taxon>Rodentia</taxon>
        <taxon>Myomorpha</taxon>
        <taxon>Muroidea</taxon>
        <taxon>Muridae</taxon>
        <taxon>Murinae</taxon>
        <taxon>Rattus</taxon>
    </lineage>
</organism>
<comment type="function">
    <text evidence="1 6 8">Promotes neurite outgrowth in hippocampal neurons. Enhances the cell surface expression of GRIN1 and GRIN2A NMDA receptor subunits. May play a role in redistributing DLG4 to the cell periphery (By similarity).</text>
</comment>
<comment type="subunit">
    <text evidence="1 6 7">Forms heteromeric complexes with LRFN1, LRFN3 and LRFN4. Can form homomeric complexes, but not across cell junctions. Can form heteromeric complexes with LRFN5 (By similarity). Interacts with DLG1, DLG3 and DLG4; interaction with DLG4 is mediated by the PDZ-binding domain. Also interacts with DLG2 (By similarity). Interacts with 2 NMDA receptor subunits GRIN1 and GRIN2A.</text>
</comment>
<comment type="interaction">
    <interactant intactId="EBI-877185">
        <id>Q460M5</id>
    </interactant>
    <interactant intactId="EBI-389325">
        <id>Q62696</id>
        <label>Dlg1</label>
    </interactant>
    <organismsDiffer>false</organismsDiffer>
    <experiments>2</experiments>
</comment>
<comment type="interaction">
    <interactant intactId="EBI-877185">
        <id>Q460M5</id>
    </interactant>
    <interactant intactId="EBI-349596">
        <id>Q62936</id>
        <label>Dlg3</label>
    </interactant>
    <organismsDiffer>false</organismsDiffer>
    <experiments>2</experiments>
</comment>
<comment type="interaction">
    <interactant intactId="EBI-877185">
        <id>Q460M5</id>
    </interactant>
    <interactant intactId="EBI-375655">
        <id>P31016</id>
        <label>Dlg4</label>
    </interactant>
    <organismsDiffer>false</organismsDiffer>
    <experiments>3</experiments>
</comment>
<comment type="interaction">
    <interactant intactId="EBI-877185">
        <id>Q460M5</id>
    </interactant>
    <interactant intactId="EBI-877897">
        <id>P35439</id>
        <label>Grin1</label>
    </interactant>
    <organismsDiffer>false</organismsDiffer>
    <experiments>2</experiments>
</comment>
<comment type="interaction">
    <interactant intactId="EBI-877185">
        <id>Q460M5</id>
    </interactant>
    <interactant intactId="EBI-877440">
        <id>Q8CGM3</id>
        <label>Grin2a</label>
    </interactant>
    <organismsDiffer>false</organismsDiffer>
    <experiments>2</experiments>
</comment>
<comment type="interaction">
    <interactant intactId="EBI-877185">
        <id>Q460M5</id>
    </interactant>
    <interactant intactId="EBI-396905">
        <id>Q00960</id>
        <label>Grin2b</label>
    </interactant>
    <organismsDiffer>false</organismsDiffer>
    <experiments>2</experiments>
</comment>
<comment type="subcellular location">
    <subcellularLocation>
        <location evidence="6">Membrane</location>
        <topology evidence="6">Single-pass type I membrane protein</topology>
    </subcellularLocation>
    <subcellularLocation>
        <location evidence="6">Synapse</location>
    </subcellularLocation>
    <subcellularLocation>
        <location evidence="6">Postsynaptic cell membrane</location>
    </subcellularLocation>
</comment>
<comment type="domain">
    <text>The PDZ-binding motif is required for cell surface expression, neurite outgrowth promotion and interaction with DLG4.</text>
</comment>
<comment type="similarity">
    <text evidence="9">Belongs to the LRFN family.</text>
</comment>